<gene>
    <name evidence="1" type="primary">ligA</name>
    <name type="synonym">lig</name>
    <name type="synonym">ligN</name>
    <name type="ordered locus">HI_1100</name>
</gene>
<proteinExistence type="evidence at protein level"/>
<sequence length="670" mass="74043">MTNIQTQLDNLRKTLRQYEYEYHVLDNPSVPDSEYDRLFHQLKALELEHPEFLTSDSPTQRVGAKPLSGFSQIRHEIPMLSLDNAFSDAEFNAFVKRIEDRLILLPKPLTFCCEPKLDGLAVSILYVNGELTQAATRGDGTTGEDITANIRTIRNVPLQLLTDNPPARLEVRGEVFMPHAGFERLNKYALEHNEKTFANPRNAAAGSLRQLDPNITSKRPLVLNAYGIGIAEGVDLPTTHYARLQWLKSIGIPVNPEIRLCNGADEVLGFYRDIQNKRSSLGYDIDGTVLKINDIALQNELGFISKAPRWAIAYKFPAQEELTLLNDVEFQVGRTGAITPVAKLEPVFVAGVTVSNATLHNGDEIERLNIAIGDTVVIRRAGDVIPQIIGVLHERRPDNAKPIIFPTNCPVCDSQIIRIEGEAVARCTGGLFCAAQRKEALKHFVSRKAMDIDGVGGKLIEQLVDRELIHTPADLFKLDLTTLTRLERMGAKSAENALNSLENAKSTTLARFIFALGIREVGEATALNLANHFKTLDALKDANLEELQQVPDVGEVVANRIFIFWREAHNVAVVEDLIAQGVHWETVEVKEASENLFKDKTVVLTGTLTQMGRNEAKALLQQLGAKVSGSVSSKTDFVIAGDAAGSKLAKAQELNITVLTEEEFLAQITR</sequence>
<name>DNLJ_HAEIN</name>
<protein>
    <recommendedName>
        <fullName evidence="1">DNA ligase</fullName>
        <ecNumber evidence="1">6.5.1.2</ecNumber>
    </recommendedName>
    <alternativeName>
        <fullName evidence="1">Polydeoxyribonucleotide synthase [NAD(+)]</fullName>
    </alternativeName>
</protein>
<dbReference type="EC" id="6.5.1.2" evidence="1"/>
<dbReference type="EMBL" id="L42023">
    <property type="protein sequence ID" value="AAC22753.1"/>
    <property type="status" value="ALT_INIT"/>
    <property type="molecule type" value="Genomic_DNA"/>
</dbReference>
<dbReference type="PIR" id="D64182">
    <property type="entry name" value="D64182"/>
</dbReference>
<dbReference type="RefSeq" id="NP_439257.2">
    <property type="nucleotide sequence ID" value="NC_000907.1"/>
</dbReference>
<dbReference type="PDB" id="3BAC">
    <property type="method" value="X-ray"/>
    <property type="resolution" value="3.00 A"/>
    <property type="chains" value="A=64-327"/>
</dbReference>
<dbReference type="PDB" id="3PN1">
    <property type="method" value="X-ray"/>
    <property type="resolution" value="2.00 A"/>
    <property type="chains" value="A=1-318"/>
</dbReference>
<dbReference type="PDB" id="3UQ8">
    <property type="method" value="X-ray"/>
    <property type="resolution" value="1.70 A"/>
    <property type="chains" value="A=3-324"/>
</dbReference>
<dbReference type="PDB" id="4UCO">
    <property type="method" value="X-ray"/>
    <property type="resolution" value="2.50 A"/>
    <property type="chains" value="A=1-324"/>
</dbReference>
<dbReference type="PDB" id="4UCR">
    <property type="method" value="X-ray"/>
    <property type="resolution" value="2.15 A"/>
    <property type="chains" value="A=1-324"/>
</dbReference>
<dbReference type="PDB" id="4UCS">
    <property type="method" value="X-ray"/>
    <property type="resolution" value="1.90 A"/>
    <property type="chains" value="A=1-324"/>
</dbReference>
<dbReference type="PDB" id="4UCT">
    <property type="method" value="X-ray"/>
    <property type="resolution" value="2.10 A"/>
    <property type="chains" value="A=1-324"/>
</dbReference>
<dbReference type="PDB" id="4UCU">
    <property type="method" value="X-ray"/>
    <property type="resolution" value="2.10 A"/>
    <property type="chains" value="A=1-324"/>
</dbReference>
<dbReference type="PDB" id="4UCV">
    <property type="method" value="X-ray"/>
    <property type="resolution" value="2.60 A"/>
    <property type="chains" value="A=1-324"/>
</dbReference>
<dbReference type="PDB" id="4UFZ">
    <property type="method" value="X-ray"/>
    <property type="resolution" value="2.33 A"/>
    <property type="chains" value="A=1-324"/>
</dbReference>
<dbReference type="PDBsum" id="3BAC"/>
<dbReference type="PDBsum" id="3PN1"/>
<dbReference type="PDBsum" id="3UQ8"/>
<dbReference type="PDBsum" id="4UCO"/>
<dbReference type="PDBsum" id="4UCR"/>
<dbReference type="PDBsum" id="4UCS"/>
<dbReference type="PDBsum" id="4UCT"/>
<dbReference type="PDBsum" id="4UCU"/>
<dbReference type="PDBsum" id="4UCV"/>
<dbReference type="PDBsum" id="4UFZ"/>
<dbReference type="SMR" id="P43813"/>
<dbReference type="STRING" id="71421.HI_1100"/>
<dbReference type="DrugBank" id="DB07041">
    <property type="generic name" value="N-[2-(2,4-diaminopyrido[2,3-d]pyrimidin-7-yl)-2-methylpropyl]-4-phenoxybenzamide"/>
</dbReference>
<dbReference type="EnsemblBacteria" id="AAC22753">
    <property type="protein sequence ID" value="AAC22753"/>
    <property type="gene ID" value="HI_1100"/>
</dbReference>
<dbReference type="KEGG" id="hin:HI_1100"/>
<dbReference type="PATRIC" id="fig|71421.8.peg.1146"/>
<dbReference type="eggNOG" id="COG0272">
    <property type="taxonomic scope" value="Bacteria"/>
</dbReference>
<dbReference type="HOGENOM" id="CLU_007764_2_1_6"/>
<dbReference type="OrthoDB" id="9759736at2"/>
<dbReference type="PhylomeDB" id="P43813"/>
<dbReference type="BioCyc" id="HINF71421:G1GJ1-1135-MONOMER"/>
<dbReference type="BRENDA" id="6.5.1.2">
    <property type="organism ID" value="2529"/>
</dbReference>
<dbReference type="EvolutionaryTrace" id="P43813"/>
<dbReference type="Proteomes" id="UP000000579">
    <property type="component" value="Chromosome"/>
</dbReference>
<dbReference type="GO" id="GO:0005829">
    <property type="term" value="C:cytosol"/>
    <property type="evidence" value="ECO:0000318"/>
    <property type="project" value="GO_Central"/>
</dbReference>
<dbReference type="GO" id="GO:0003677">
    <property type="term" value="F:DNA binding"/>
    <property type="evidence" value="ECO:0007669"/>
    <property type="project" value="InterPro"/>
</dbReference>
<dbReference type="GO" id="GO:0003911">
    <property type="term" value="F:DNA ligase (NAD+) activity"/>
    <property type="evidence" value="ECO:0000318"/>
    <property type="project" value="GO_Central"/>
</dbReference>
<dbReference type="GO" id="GO:0046872">
    <property type="term" value="F:metal ion binding"/>
    <property type="evidence" value="ECO:0007669"/>
    <property type="project" value="UniProtKB-KW"/>
</dbReference>
<dbReference type="GO" id="GO:0006281">
    <property type="term" value="P:DNA repair"/>
    <property type="evidence" value="ECO:0007669"/>
    <property type="project" value="UniProtKB-KW"/>
</dbReference>
<dbReference type="GO" id="GO:0006260">
    <property type="term" value="P:DNA replication"/>
    <property type="evidence" value="ECO:0007669"/>
    <property type="project" value="UniProtKB-KW"/>
</dbReference>
<dbReference type="CDD" id="cd17748">
    <property type="entry name" value="BRCT_DNA_ligase_like"/>
    <property type="match status" value="1"/>
</dbReference>
<dbReference type="CDD" id="cd00114">
    <property type="entry name" value="LIGANc"/>
    <property type="match status" value="1"/>
</dbReference>
<dbReference type="FunFam" id="1.10.150.20:FF:000006">
    <property type="entry name" value="DNA ligase"/>
    <property type="match status" value="1"/>
</dbReference>
<dbReference type="FunFam" id="1.10.150.20:FF:000007">
    <property type="entry name" value="DNA ligase"/>
    <property type="match status" value="1"/>
</dbReference>
<dbReference type="FunFam" id="1.10.287.610:FF:000002">
    <property type="entry name" value="DNA ligase"/>
    <property type="match status" value="1"/>
</dbReference>
<dbReference type="FunFam" id="2.40.50.140:FF:000012">
    <property type="entry name" value="DNA ligase"/>
    <property type="match status" value="1"/>
</dbReference>
<dbReference type="FunFam" id="3.30.470.30:FF:000001">
    <property type="entry name" value="DNA ligase"/>
    <property type="match status" value="1"/>
</dbReference>
<dbReference type="FunFam" id="6.20.10.30:FF:000001">
    <property type="entry name" value="DNA ligase"/>
    <property type="match status" value="1"/>
</dbReference>
<dbReference type="Gene3D" id="6.20.10.30">
    <property type="match status" value="1"/>
</dbReference>
<dbReference type="Gene3D" id="1.10.150.20">
    <property type="entry name" value="5' to 3' exonuclease, C-terminal subdomain"/>
    <property type="match status" value="2"/>
</dbReference>
<dbReference type="Gene3D" id="3.40.50.10190">
    <property type="entry name" value="BRCT domain"/>
    <property type="match status" value="1"/>
</dbReference>
<dbReference type="Gene3D" id="3.30.470.30">
    <property type="entry name" value="DNA ligase/mRNA capping enzyme"/>
    <property type="match status" value="1"/>
</dbReference>
<dbReference type="Gene3D" id="1.10.287.610">
    <property type="entry name" value="Helix hairpin bin"/>
    <property type="match status" value="1"/>
</dbReference>
<dbReference type="Gene3D" id="2.40.50.140">
    <property type="entry name" value="Nucleic acid-binding proteins"/>
    <property type="match status" value="1"/>
</dbReference>
<dbReference type="HAMAP" id="MF_01588">
    <property type="entry name" value="DNA_ligase_A"/>
    <property type="match status" value="1"/>
</dbReference>
<dbReference type="InterPro" id="IPR001357">
    <property type="entry name" value="BRCT_dom"/>
</dbReference>
<dbReference type="InterPro" id="IPR036420">
    <property type="entry name" value="BRCT_dom_sf"/>
</dbReference>
<dbReference type="InterPro" id="IPR041663">
    <property type="entry name" value="DisA/LigA_HHH"/>
</dbReference>
<dbReference type="InterPro" id="IPR001679">
    <property type="entry name" value="DNA_ligase"/>
</dbReference>
<dbReference type="InterPro" id="IPR018239">
    <property type="entry name" value="DNA_ligase_AS"/>
</dbReference>
<dbReference type="InterPro" id="IPR033136">
    <property type="entry name" value="DNA_ligase_CS"/>
</dbReference>
<dbReference type="InterPro" id="IPR013839">
    <property type="entry name" value="DNAligase_adenylation"/>
</dbReference>
<dbReference type="InterPro" id="IPR013840">
    <property type="entry name" value="DNAligase_N"/>
</dbReference>
<dbReference type="InterPro" id="IPR003583">
    <property type="entry name" value="Hlx-hairpin-Hlx_DNA-bd_motif"/>
</dbReference>
<dbReference type="InterPro" id="IPR012340">
    <property type="entry name" value="NA-bd_OB-fold"/>
</dbReference>
<dbReference type="InterPro" id="IPR004150">
    <property type="entry name" value="NAD_DNA_ligase_OB"/>
</dbReference>
<dbReference type="InterPro" id="IPR010994">
    <property type="entry name" value="RuvA_2-like"/>
</dbReference>
<dbReference type="InterPro" id="IPR004149">
    <property type="entry name" value="Znf_DNAligase_C4"/>
</dbReference>
<dbReference type="NCBIfam" id="TIGR00575">
    <property type="entry name" value="dnlj"/>
    <property type="match status" value="1"/>
</dbReference>
<dbReference type="NCBIfam" id="NF005932">
    <property type="entry name" value="PRK07956.1"/>
    <property type="match status" value="1"/>
</dbReference>
<dbReference type="PANTHER" id="PTHR23389">
    <property type="entry name" value="CHROMOSOME TRANSMISSION FIDELITY FACTOR 18"/>
    <property type="match status" value="1"/>
</dbReference>
<dbReference type="PANTHER" id="PTHR23389:SF9">
    <property type="entry name" value="DNA LIGASE"/>
    <property type="match status" value="1"/>
</dbReference>
<dbReference type="Pfam" id="PF00533">
    <property type="entry name" value="BRCT"/>
    <property type="match status" value="1"/>
</dbReference>
<dbReference type="Pfam" id="PF01653">
    <property type="entry name" value="DNA_ligase_aden"/>
    <property type="match status" value="1"/>
</dbReference>
<dbReference type="Pfam" id="PF03120">
    <property type="entry name" value="DNA_ligase_OB"/>
    <property type="match status" value="1"/>
</dbReference>
<dbReference type="Pfam" id="PF03119">
    <property type="entry name" value="DNA_ligase_ZBD"/>
    <property type="match status" value="1"/>
</dbReference>
<dbReference type="Pfam" id="PF12826">
    <property type="entry name" value="HHH_2"/>
    <property type="match status" value="1"/>
</dbReference>
<dbReference type="Pfam" id="PF14520">
    <property type="entry name" value="HHH_5"/>
    <property type="match status" value="1"/>
</dbReference>
<dbReference type="Pfam" id="PF22745">
    <property type="entry name" value="Nlig-Ia"/>
    <property type="match status" value="1"/>
</dbReference>
<dbReference type="PIRSF" id="PIRSF001604">
    <property type="entry name" value="LigA"/>
    <property type="match status" value="1"/>
</dbReference>
<dbReference type="SMART" id="SM00292">
    <property type="entry name" value="BRCT"/>
    <property type="match status" value="1"/>
</dbReference>
<dbReference type="SMART" id="SM00278">
    <property type="entry name" value="HhH1"/>
    <property type="match status" value="4"/>
</dbReference>
<dbReference type="SMART" id="SM00532">
    <property type="entry name" value="LIGANc"/>
    <property type="match status" value="1"/>
</dbReference>
<dbReference type="SUPFAM" id="SSF52113">
    <property type="entry name" value="BRCT domain"/>
    <property type="match status" value="1"/>
</dbReference>
<dbReference type="SUPFAM" id="SSF56091">
    <property type="entry name" value="DNA ligase/mRNA capping enzyme, catalytic domain"/>
    <property type="match status" value="1"/>
</dbReference>
<dbReference type="SUPFAM" id="SSF50249">
    <property type="entry name" value="Nucleic acid-binding proteins"/>
    <property type="match status" value="1"/>
</dbReference>
<dbReference type="SUPFAM" id="SSF47781">
    <property type="entry name" value="RuvA domain 2-like"/>
    <property type="match status" value="1"/>
</dbReference>
<dbReference type="PROSITE" id="PS50172">
    <property type="entry name" value="BRCT"/>
    <property type="match status" value="1"/>
</dbReference>
<dbReference type="PROSITE" id="PS01055">
    <property type="entry name" value="DNA_LIGASE_N1"/>
    <property type="match status" value="1"/>
</dbReference>
<dbReference type="PROSITE" id="PS01056">
    <property type="entry name" value="DNA_LIGASE_N2"/>
    <property type="match status" value="1"/>
</dbReference>
<organism>
    <name type="scientific">Haemophilus influenzae (strain ATCC 51907 / DSM 11121 / KW20 / Rd)</name>
    <dbReference type="NCBI Taxonomy" id="71421"/>
    <lineage>
        <taxon>Bacteria</taxon>
        <taxon>Pseudomonadati</taxon>
        <taxon>Pseudomonadota</taxon>
        <taxon>Gammaproteobacteria</taxon>
        <taxon>Pasteurellales</taxon>
        <taxon>Pasteurellaceae</taxon>
        <taxon>Haemophilus</taxon>
    </lineage>
</organism>
<accession>P43813</accession>
<evidence type="ECO:0000255" key="1">
    <source>
        <dbReference type="HAMAP-Rule" id="MF_01588"/>
    </source>
</evidence>
<evidence type="ECO:0000305" key="2"/>
<evidence type="ECO:0007829" key="3">
    <source>
        <dbReference type="PDB" id="3UQ8"/>
    </source>
</evidence>
<evidence type="ECO:0007829" key="4">
    <source>
        <dbReference type="PDB" id="4UCS"/>
    </source>
</evidence>
<keyword id="KW-0002">3D-structure</keyword>
<keyword id="KW-0227">DNA damage</keyword>
<keyword id="KW-0234">DNA repair</keyword>
<keyword id="KW-0235">DNA replication</keyword>
<keyword id="KW-0436">Ligase</keyword>
<keyword id="KW-0460">Magnesium</keyword>
<keyword id="KW-0464">Manganese</keyword>
<keyword id="KW-0479">Metal-binding</keyword>
<keyword id="KW-0520">NAD</keyword>
<keyword id="KW-1185">Reference proteome</keyword>
<keyword id="KW-0862">Zinc</keyword>
<comment type="function">
    <text evidence="1">DNA ligase that catalyzes the formation of phosphodiester linkages between 5'-phosphoryl and 3'-hydroxyl groups in double-stranded DNA using NAD as a coenzyme and as the energy source for the reaction. It is essential for DNA replication and repair of damaged DNA.</text>
</comment>
<comment type="catalytic activity">
    <reaction evidence="1">
        <text>NAD(+) + (deoxyribonucleotide)n-3'-hydroxyl + 5'-phospho-(deoxyribonucleotide)m = (deoxyribonucleotide)n+m + AMP + beta-nicotinamide D-nucleotide.</text>
        <dbReference type="EC" id="6.5.1.2"/>
    </reaction>
</comment>
<comment type="cofactor">
    <cofactor evidence="1">
        <name>Mg(2+)</name>
        <dbReference type="ChEBI" id="CHEBI:18420"/>
    </cofactor>
    <cofactor evidence="1">
        <name>Mn(2+)</name>
        <dbReference type="ChEBI" id="CHEBI:29035"/>
    </cofactor>
</comment>
<comment type="similarity">
    <text evidence="1">Belongs to the NAD-dependent DNA ligase family. LigA subfamily.</text>
</comment>
<comment type="sequence caution" evidence="2">
    <conflict type="erroneous initiation">
        <sequence resource="EMBL-CDS" id="AAC22753"/>
    </conflict>
</comment>
<feature type="chain" id="PRO_0000161746" description="DNA ligase">
    <location>
        <begin position="1"/>
        <end position="670"/>
    </location>
</feature>
<feature type="domain" description="BRCT" evidence="1">
    <location>
        <begin position="592"/>
        <end position="670"/>
    </location>
</feature>
<feature type="active site" description="N6-AMP-lysine intermediate" evidence="1">
    <location>
        <position position="116"/>
    </location>
</feature>
<feature type="binding site" evidence="1">
    <location>
        <begin position="32"/>
        <end position="36"/>
    </location>
    <ligand>
        <name>NAD(+)</name>
        <dbReference type="ChEBI" id="CHEBI:57540"/>
    </ligand>
</feature>
<feature type="binding site" evidence="1">
    <location>
        <begin position="81"/>
        <end position="82"/>
    </location>
    <ligand>
        <name>NAD(+)</name>
        <dbReference type="ChEBI" id="CHEBI:57540"/>
    </ligand>
</feature>
<feature type="binding site" evidence="1">
    <location>
        <position position="114"/>
    </location>
    <ligand>
        <name>NAD(+)</name>
        <dbReference type="ChEBI" id="CHEBI:57540"/>
    </ligand>
</feature>
<feature type="binding site" evidence="1">
    <location>
        <position position="137"/>
    </location>
    <ligand>
        <name>NAD(+)</name>
        <dbReference type="ChEBI" id="CHEBI:57540"/>
    </ligand>
</feature>
<feature type="binding site" evidence="1">
    <location>
        <position position="174"/>
    </location>
    <ligand>
        <name>NAD(+)</name>
        <dbReference type="ChEBI" id="CHEBI:57540"/>
    </ligand>
</feature>
<feature type="binding site" evidence="1">
    <location>
        <position position="291"/>
    </location>
    <ligand>
        <name>NAD(+)</name>
        <dbReference type="ChEBI" id="CHEBI:57540"/>
    </ligand>
</feature>
<feature type="binding site" evidence="1">
    <location>
        <position position="315"/>
    </location>
    <ligand>
        <name>NAD(+)</name>
        <dbReference type="ChEBI" id="CHEBI:57540"/>
    </ligand>
</feature>
<feature type="binding site" evidence="1">
    <location>
        <position position="409"/>
    </location>
    <ligand>
        <name>Zn(2+)</name>
        <dbReference type="ChEBI" id="CHEBI:29105"/>
    </ligand>
</feature>
<feature type="binding site" evidence="1">
    <location>
        <position position="412"/>
    </location>
    <ligand>
        <name>Zn(2+)</name>
        <dbReference type="ChEBI" id="CHEBI:29105"/>
    </ligand>
</feature>
<feature type="binding site" evidence="1">
    <location>
        <position position="427"/>
    </location>
    <ligand>
        <name>Zn(2+)</name>
        <dbReference type="ChEBI" id="CHEBI:29105"/>
    </ligand>
</feature>
<feature type="binding site" evidence="1">
    <location>
        <position position="433"/>
    </location>
    <ligand>
        <name>Zn(2+)</name>
        <dbReference type="ChEBI" id="CHEBI:29105"/>
    </ligand>
</feature>
<feature type="helix" evidence="3">
    <location>
        <begin position="4"/>
        <end position="23"/>
    </location>
</feature>
<feature type="helix" evidence="3">
    <location>
        <begin position="32"/>
        <end position="48"/>
    </location>
</feature>
<feature type="helix" evidence="3">
    <location>
        <begin position="50"/>
        <end position="52"/>
    </location>
</feature>
<feature type="helix" evidence="3">
    <location>
        <begin position="58"/>
        <end position="60"/>
    </location>
</feature>
<feature type="strand" evidence="3">
    <location>
        <begin position="72"/>
        <end position="74"/>
    </location>
</feature>
<feature type="helix" evidence="3">
    <location>
        <begin position="88"/>
        <end position="101"/>
    </location>
</feature>
<feature type="strand" evidence="4">
    <location>
        <begin position="102"/>
        <end position="104"/>
    </location>
</feature>
<feature type="strand" evidence="3">
    <location>
        <begin position="110"/>
        <end position="127"/>
    </location>
</feature>
<feature type="strand" evidence="3">
    <location>
        <begin position="130"/>
        <end position="136"/>
    </location>
</feature>
<feature type="strand" evidence="3">
    <location>
        <begin position="140"/>
        <end position="145"/>
    </location>
</feature>
<feature type="helix" evidence="3">
    <location>
        <begin position="147"/>
        <end position="151"/>
    </location>
</feature>
<feature type="strand" evidence="4">
    <location>
        <begin position="161"/>
        <end position="164"/>
    </location>
</feature>
<feature type="strand" evidence="3">
    <location>
        <begin position="167"/>
        <end position="176"/>
    </location>
</feature>
<feature type="helix" evidence="3">
    <location>
        <begin position="179"/>
        <end position="191"/>
    </location>
</feature>
<feature type="helix" evidence="3">
    <location>
        <begin position="200"/>
        <end position="208"/>
    </location>
</feature>
<feature type="helix" evidence="3">
    <location>
        <begin position="213"/>
        <end position="216"/>
    </location>
</feature>
<feature type="strand" evidence="3">
    <location>
        <begin position="222"/>
        <end position="233"/>
    </location>
</feature>
<feature type="helix" evidence="3">
    <location>
        <begin position="240"/>
        <end position="249"/>
    </location>
</feature>
<feature type="strand" evidence="3">
    <location>
        <begin position="259"/>
        <end position="263"/>
    </location>
</feature>
<feature type="helix" evidence="3">
    <location>
        <begin position="264"/>
        <end position="276"/>
    </location>
</feature>
<feature type="turn" evidence="3">
    <location>
        <begin position="277"/>
        <end position="281"/>
    </location>
</feature>
<feature type="strand" evidence="3">
    <location>
        <begin position="285"/>
        <end position="294"/>
    </location>
</feature>
<feature type="helix" evidence="3">
    <location>
        <begin position="295"/>
        <end position="301"/>
    </location>
</feature>
<feature type="strand" evidence="3">
    <location>
        <begin position="311"/>
        <end position="315"/>
    </location>
</feature>
<feature type="helix" evidence="3">
    <location>
        <begin position="319"/>
        <end position="321"/>
    </location>
</feature>
<reference key="1">
    <citation type="journal article" date="1995" name="Science">
        <title>Whole-genome random sequencing and assembly of Haemophilus influenzae Rd.</title>
        <authorList>
            <person name="Fleischmann R.D."/>
            <person name="Adams M.D."/>
            <person name="White O."/>
            <person name="Clayton R.A."/>
            <person name="Kirkness E.F."/>
            <person name="Kerlavage A.R."/>
            <person name="Bult C.J."/>
            <person name="Tomb J.-F."/>
            <person name="Dougherty B.A."/>
            <person name="Merrick J.M."/>
            <person name="McKenney K."/>
            <person name="Sutton G.G."/>
            <person name="FitzHugh W."/>
            <person name="Fields C.A."/>
            <person name="Gocayne J.D."/>
            <person name="Scott J.D."/>
            <person name="Shirley R."/>
            <person name="Liu L.-I."/>
            <person name="Glodek A."/>
            <person name="Kelley J.M."/>
            <person name="Weidman J.F."/>
            <person name="Phillips C.A."/>
            <person name="Spriggs T."/>
            <person name="Hedblom E."/>
            <person name="Cotton M.D."/>
            <person name="Utterback T.R."/>
            <person name="Hanna M.C."/>
            <person name="Nguyen D.T."/>
            <person name="Saudek D.M."/>
            <person name="Brandon R.C."/>
            <person name="Fine L.D."/>
            <person name="Fritchman J.L."/>
            <person name="Fuhrmann J.L."/>
            <person name="Geoghagen N.S.M."/>
            <person name="Gnehm C.L."/>
            <person name="McDonald L.A."/>
            <person name="Small K.V."/>
            <person name="Fraser C.M."/>
            <person name="Smith H.O."/>
            <person name="Venter J.C."/>
        </authorList>
    </citation>
    <scope>NUCLEOTIDE SEQUENCE [LARGE SCALE GENOMIC DNA]</scope>
    <source>
        <strain>ATCC 51907 / DSM 11121 / KW20 / Rd</strain>
    </source>
</reference>